<dbReference type="EC" id="1.1.1.103" evidence="1"/>
<dbReference type="EMBL" id="CP000880">
    <property type="protein sequence ID" value="ABX23727.1"/>
    <property type="molecule type" value="Genomic_DNA"/>
</dbReference>
<dbReference type="SMR" id="A9MKQ8"/>
<dbReference type="STRING" id="41514.SARI_03933"/>
<dbReference type="KEGG" id="ses:SARI_03933"/>
<dbReference type="HOGENOM" id="CLU_026673_11_0_6"/>
<dbReference type="UniPathway" id="UPA00046">
    <property type="reaction ID" value="UER00505"/>
</dbReference>
<dbReference type="Proteomes" id="UP000002084">
    <property type="component" value="Chromosome"/>
</dbReference>
<dbReference type="GO" id="GO:0005737">
    <property type="term" value="C:cytoplasm"/>
    <property type="evidence" value="ECO:0007669"/>
    <property type="project" value="UniProtKB-SubCell"/>
</dbReference>
<dbReference type="GO" id="GO:0008743">
    <property type="term" value="F:L-threonine 3-dehydrogenase activity"/>
    <property type="evidence" value="ECO:0007669"/>
    <property type="project" value="UniProtKB-UniRule"/>
</dbReference>
<dbReference type="GO" id="GO:0008270">
    <property type="term" value="F:zinc ion binding"/>
    <property type="evidence" value="ECO:0007669"/>
    <property type="project" value="UniProtKB-UniRule"/>
</dbReference>
<dbReference type="GO" id="GO:0019518">
    <property type="term" value="P:L-threonine catabolic process to glycine"/>
    <property type="evidence" value="ECO:0007669"/>
    <property type="project" value="UniProtKB-UniPathway"/>
</dbReference>
<dbReference type="FunFam" id="3.40.50.720:FF:000059">
    <property type="entry name" value="L-threonine 3-dehydrogenase"/>
    <property type="match status" value="1"/>
</dbReference>
<dbReference type="Gene3D" id="3.90.180.10">
    <property type="entry name" value="Medium-chain alcohol dehydrogenases, catalytic domain"/>
    <property type="match status" value="1"/>
</dbReference>
<dbReference type="Gene3D" id="3.40.50.720">
    <property type="entry name" value="NAD(P)-binding Rossmann-like Domain"/>
    <property type="match status" value="1"/>
</dbReference>
<dbReference type="HAMAP" id="MF_00627">
    <property type="entry name" value="Thr_dehydrog"/>
    <property type="match status" value="1"/>
</dbReference>
<dbReference type="InterPro" id="IPR013149">
    <property type="entry name" value="ADH-like_C"/>
</dbReference>
<dbReference type="InterPro" id="IPR013154">
    <property type="entry name" value="ADH-like_N"/>
</dbReference>
<dbReference type="InterPro" id="IPR002328">
    <property type="entry name" value="ADH_Zn_CS"/>
</dbReference>
<dbReference type="InterPro" id="IPR011032">
    <property type="entry name" value="GroES-like_sf"/>
</dbReference>
<dbReference type="InterPro" id="IPR004627">
    <property type="entry name" value="L-Threonine_3-DHase"/>
</dbReference>
<dbReference type="InterPro" id="IPR036291">
    <property type="entry name" value="NAD(P)-bd_dom_sf"/>
</dbReference>
<dbReference type="InterPro" id="IPR020843">
    <property type="entry name" value="PKS_ER"/>
</dbReference>
<dbReference type="InterPro" id="IPR050129">
    <property type="entry name" value="Zn_alcohol_dh"/>
</dbReference>
<dbReference type="NCBIfam" id="NF003808">
    <property type="entry name" value="PRK05396.1"/>
    <property type="match status" value="1"/>
</dbReference>
<dbReference type="NCBIfam" id="TIGR00692">
    <property type="entry name" value="tdh"/>
    <property type="match status" value="1"/>
</dbReference>
<dbReference type="PANTHER" id="PTHR43401">
    <property type="entry name" value="L-THREONINE 3-DEHYDROGENASE"/>
    <property type="match status" value="1"/>
</dbReference>
<dbReference type="PANTHER" id="PTHR43401:SF2">
    <property type="entry name" value="L-THREONINE 3-DEHYDROGENASE"/>
    <property type="match status" value="1"/>
</dbReference>
<dbReference type="Pfam" id="PF08240">
    <property type="entry name" value="ADH_N"/>
    <property type="match status" value="1"/>
</dbReference>
<dbReference type="Pfam" id="PF00107">
    <property type="entry name" value="ADH_zinc_N"/>
    <property type="match status" value="1"/>
</dbReference>
<dbReference type="SMART" id="SM00829">
    <property type="entry name" value="PKS_ER"/>
    <property type="match status" value="1"/>
</dbReference>
<dbReference type="SUPFAM" id="SSF50129">
    <property type="entry name" value="GroES-like"/>
    <property type="match status" value="1"/>
</dbReference>
<dbReference type="SUPFAM" id="SSF51735">
    <property type="entry name" value="NAD(P)-binding Rossmann-fold domains"/>
    <property type="match status" value="1"/>
</dbReference>
<dbReference type="PROSITE" id="PS00059">
    <property type="entry name" value="ADH_ZINC"/>
    <property type="match status" value="1"/>
</dbReference>
<proteinExistence type="inferred from homology"/>
<keyword id="KW-0963">Cytoplasm</keyword>
<keyword id="KW-0479">Metal-binding</keyword>
<keyword id="KW-0520">NAD</keyword>
<keyword id="KW-0560">Oxidoreductase</keyword>
<keyword id="KW-1185">Reference proteome</keyword>
<keyword id="KW-0862">Zinc</keyword>
<accession>A9MKQ8</accession>
<name>TDH_SALAR</name>
<reference key="1">
    <citation type="submission" date="2007-11" db="EMBL/GenBank/DDBJ databases">
        <authorList>
            <consortium name="The Salmonella enterica serovar Arizonae Genome Sequencing Project"/>
            <person name="McClelland M."/>
            <person name="Sanderson E.K."/>
            <person name="Porwollik S."/>
            <person name="Spieth J."/>
            <person name="Clifton W.S."/>
            <person name="Fulton R."/>
            <person name="Chunyan W."/>
            <person name="Wollam A."/>
            <person name="Shah N."/>
            <person name="Pepin K."/>
            <person name="Bhonagiri V."/>
            <person name="Nash W."/>
            <person name="Johnson M."/>
            <person name="Thiruvilangam P."/>
            <person name="Wilson R."/>
        </authorList>
    </citation>
    <scope>NUCLEOTIDE SEQUENCE [LARGE SCALE GENOMIC DNA]</scope>
    <source>
        <strain>ATCC BAA-731 / CDC346-86 / RSK2980</strain>
    </source>
</reference>
<organism>
    <name type="scientific">Salmonella arizonae (strain ATCC BAA-731 / CDC346-86 / RSK2980)</name>
    <dbReference type="NCBI Taxonomy" id="41514"/>
    <lineage>
        <taxon>Bacteria</taxon>
        <taxon>Pseudomonadati</taxon>
        <taxon>Pseudomonadota</taxon>
        <taxon>Gammaproteobacteria</taxon>
        <taxon>Enterobacterales</taxon>
        <taxon>Enterobacteriaceae</taxon>
        <taxon>Salmonella</taxon>
    </lineage>
</organism>
<comment type="function">
    <text evidence="1">Catalyzes the NAD(+)-dependent oxidation of L-threonine to 2-amino-3-ketobutyrate.</text>
</comment>
<comment type="catalytic activity">
    <reaction evidence="1">
        <text>L-threonine + NAD(+) = (2S)-2-amino-3-oxobutanoate + NADH + H(+)</text>
        <dbReference type="Rhea" id="RHEA:13161"/>
        <dbReference type="ChEBI" id="CHEBI:15378"/>
        <dbReference type="ChEBI" id="CHEBI:57540"/>
        <dbReference type="ChEBI" id="CHEBI:57926"/>
        <dbReference type="ChEBI" id="CHEBI:57945"/>
        <dbReference type="ChEBI" id="CHEBI:78948"/>
        <dbReference type="EC" id="1.1.1.103"/>
    </reaction>
</comment>
<comment type="cofactor">
    <cofactor evidence="1">
        <name>Zn(2+)</name>
        <dbReference type="ChEBI" id="CHEBI:29105"/>
    </cofactor>
    <text evidence="1">Binds 2 Zn(2+) ions per subunit.</text>
</comment>
<comment type="pathway">
    <text evidence="1">Amino-acid degradation; L-threonine degradation via oxydo-reductase pathway; glycine from L-threonine: step 1/2.</text>
</comment>
<comment type="subunit">
    <text evidence="1">Homotetramer.</text>
</comment>
<comment type="subcellular location">
    <subcellularLocation>
        <location evidence="1">Cytoplasm</location>
    </subcellularLocation>
</comment>
<comment type="similarity">
    <text evidence="1">Belongs to the zinc-containing alcohol dehydrogenase family.</text>
</comment>
<gene>
    <name evidence="1" type="primary">tdh</name>
    <name type="ordered locus">SARI_03933</name>
</gene>
<protein>
    <recommendedName>
        <fullName evidence="1">L-threonine 3-dehydrogenase</fullName>
        <shortName evidence="1">TDH</shortName>
        <ecNumber evidence="1">1.1.1.103</ecNumber>
    </recommendedName>
</protein>
<evidence type="ECO:0000255" key="1">
    <source>
        <dbReference type="HAMAP-Rule" id="MF_00627"/>
    </source>
</evidence>
<feature type="chain" id="PRO_1000082613" description="L-threonine 3-dehydrogenase">
    <location>
        <begin position="1"/>
        <end position="341"/>
    </location>
</feature>
<feature type="active site" description="Charge relay system" evidence="1">
    <location>
        <position position="40"/>
    </location>
</feature>
<feature type="active site" description="Charge relay system" evidence="1">
    <location>
        <position position="43"/>
    </location>
</feature>
<feature type="binding site" evidence="1">
    <location>
        <position position="38"/>
    </location>
    <ligand>
        <name>Zn(2+)</name>
        <dbReference type="ChEBI" id="CHEBI:29105"/>
        <label>1</label>
        <note>catalytic</note>
    </ligand>
</feature>
<feature type="binding site" evidence="1">
    <location>
        <position position="63"/>
    </location>
    <ligand>
        <name>Zn(2+)</name>
        <dbReference type="ChEBI" id="CHEBI:29105"/>
        <label>1</label>
        <note>catalytic</note>
    </ligand>
</feature>
<feature type="binding site" evidence="1">
    <location>
        <position position="64"/>
    </location>
    <ligand>
        <name>Zn(2+)</name>
        <dbReference type="ChEBI" id="CHEBI:29105"/>
        <label>1</label>
        <note>catalytic</note>
    </ligand>
</feature>
<feature type="binding site" evidence="1">
    <location>
        <position position="93"/>
    </location>
    <ligand>
        <name>Zn(2+)</name>
        <dbReference type="ChEBI" id="CHEBI:29105"/>
        <label>2</label>
    </ligand>
</feature>
<feature type="binding site" evidence="1">
    <location>
        <position position="96"/>
    </location>
    <ligand>
        <name>Zn(2+)</name>
        <dbReference type="ChEBI" id="CHEBI:29105"/>
        <label>2</label>
    </ligand>
</feature>
<feature type="binding site" evidence="1">
    <location>
        <position position="99"/>
    </location>
    <ligand>
        <name>Zn(2+)</name>
        <dbReference type="ChEBI" id="CHEBI:29105"/>
        <label>2</label>
    </ligand>
</feature>
<feature type="binding site" evidence="1">
    <location>
        <position position="107"/>
    </location>
    <ligand>
        <name>Zn(2+)</name>
        <dbReference type="ChEBI" id="CHEBI:29105"/>
        <label>2</label>
    </ligand>
</feature>
<feature type="binding site" evidence="1">
    <location>
        <position position="175"/>
    </location>
    <ligand>
        <name>NAD(+)</name>
        <dbReference type="ChEBI" id="CHEBI:57540"/>
    </ligand>
</feature>
<feature type="binding site" evidence="1">
    <location>
        <position position="195"/>
    </location>
    <ligand>
        <name>NAD(+)</name>
        <dbReference type="ChEBI" id="CHEBI:57540"/>
    </ligand>
</feature>
<feature type="binding site" evidence="1">
    <location>
        <position position="200"/>
    </location>
    <ligand>
        <name>NAD(+)</name>
        <dbReference type="ChEBI" id="CHEBI:57540"/>
    </ligand>
</feature>
<feature type="binding site" evidence="1">
    <location>
        <begin position="262"/>
        <end position="264"/>
    </location>
    <ligand>
        <name>NAD(+)</name>
        <dbReference type="ChEBI" id="CHEBI:57540"/>
    </ligand>
</feature>
<feature type="binding site" evidence="1">
    <location>
        <begin position="286"/>
        <end position="287"/>
    </location>
    <ligand>
        <name>NAD(+)</name>
        <dbReference type="ChEBI" id="CHEBI:57540"/>
    </ligand>
</feature>
<feature type="site" description="Important for catalytic activity for the proton relay mechanism but does not participate directly in the coordination of zinc atom" evidence="1">
    <location>
        <position position="148"/>
    </location>
</feature>
<sequence length="341" mass="37184">MKALSKLKAEEGIWMTDVPEPEVGHNDLLIKIRKTAICGTDVHIYNWDEWSQKTIPVPMVVGHEYVGEVVGIGQEVKGFNIGDRVSGEGHITCGHCRNCRGGRTHLCRNTTGVGVNRPGCFAEYLVIPAFNAFKIPDNISDDLASIFDPFGNAVHTALSFDLVGEDVLVSGAGPIGVMAAAVAKHVGARHVVITDVNEYRLELARKMGVTRAVNVAKESLTDVMAELGMTEGFDVGLEMSGAPPAFRTMLDTMNHGGRIAMLGIPPADMSIDWTKVIFKGLFIKGIYGREMFETWYKMAALIQSGLDLSPIITHRFSIDDFQKGFDAMRSGQSGKVILSWD</sequence>